<proteinExistence type="evidence at protein level"/>
<name>F16P1_MOUSE</name>
<sequence length="338" mass="36912">MANHAPFETDISTLTRFVMEQGRKAQGTGELTQLLNSLCTAIKAISSAVRQAGIAQLYGIAGSTNVTGDQVKKLDILSNDLVINMLKSSYATCVLVSEENTNAIIIEPEKRGKYVVCFDPLDGSSNIDCLVSIGTIFGIYRKKSTDEPSEKDALQPGRDLVAAGYALYGSATMLVLAMDCGVNCFMLDPSIGEFIMVDRDVKMKKKGNIYSLNEGYAKDFDPAINEYLQRKKFPPDGSAPYGARYVGSMVADIHRTLVYGGIFLYPANKKSPSGKLRLLYECNPIAYVMEKAGGLATTGDKDILDIVPTEIHQKAPVVMGSSEDVQEFLEIYRKHKAK</sequence>
<evidence type="ECO:0000250" key="1"/>
<evidence type="ECO:0000250" key="2">
    <source>
        <dbReference type="UniProtKB" id="P00636"/>
    </source>
</evidence>
<evidence type="ECO:0000250" key="3">
    <source>
        <dbReference type="UniProtKB" id="P00637"/>
    </source>
</evidence>
<evidence type="ECO:0000250" key="4">
    <source>
        <dbReference type="UniProtKB" id="P19112"/>
    </source>
</evidence>
<evidence type="ECO:0000269" key="5">
    <source>
    </source>
</evidence>
<evidence type="ECO:0000269" key="6">
    <source>
    </source>
</evidence>
<evidence type="ECO:0000269" key="7">
    <source>
    </source>
</evidence>
<evidence type="ECO:0000269" key="8">
    <source>
    </source>
</evidence>
<evidence type="ECO:0000305" key="9"/>
<evidence type="ECO:0007744" key="10">
    <source>
    </source>
</evidence>
<evidence type="ECO:0007744" key="11">
    <source>
    </source>
</evidence>
<evidence type="ECO:0007744" key="12">
    <source>
    </source>
</evidence>
<dbReference type="EC" id="3.1.3.11" evidence="4"/>
<dbReference type="EMBL" id="AJ132693">
    <property type="protein sequence ID" value="CAB65244.1"/>
    <property type="molecule type" value="mRNA"/>
</dbReference>
<dbReference type="EMBL" id="AK002216">
    <property type="protein sequence ID" value="BAB21941.1"/>
    <property type="molecule type" value="mRNA"/>
</dbReference>
<dbReference type="EMBL" id="AK149527">
    <property type="protein sequence ID" value="BAE28940.1"/>
    <property type="molecule type" value="mRNA"/>
</dbReference>
<dbReference type="EMBL" id="BC011480">
    <property type="protein sequence ID" value="AAH11480.1"/>
    <property type="molecule type" value="mRNA"/>
</dbReference>
<dbReference type="EMBL" id="BC051392">
    <property type="protein sequence ID" value="AAH51392.1"/>
    <property type="molecule type" value="mRNA"/>
</dbReference>
<dbReference type="EMBL" id="Y11067">
    <property type="protein sequence ID" value="CAA71946.1"/>
    <property type="molecule type" value="mRNA"/>
</dbReference>
<dbReference type="CCDS" id="CCDS26590.1"/>
<dbReference type="RefSeq" id="NP_062268.1">
    <property type="nucleotide sequence ID" value="NM_019395.4"/>
</dbReference>
<dbReference type="SMR" id="Q9QXD6"/>
<dbReference type="BioGRID" id="199610">
    <property type="interactions" value="3"/>
</dbReference>
<dbReference type="FunCoup" id="Q9QXD6">
    <property type="interactions" value="1329"/>
</dbReference>
<dbReference type="IntAct" id="Q9QXD6">
    <property type="interactions" value="14"/>
</dbReference>
<dbReference type="MINT" id="Q9QXD6"/>
<dbReference type="STRING" id="10090.ENSMUSP00000090564"/>
<dbReference type="BindingDB" id="Q9QXD6"/>
<dbReference type="ChEMBL" id="CHEMBL5360"/>
<dbReference type="GlyGen" id="Q9QXD6">
    <property type="glycosylation" value="1 site, 1 O-linked glycan (1 site)"/>
</dbReference>
<dbReference type="iPTMnet" id="Q9QXD6"/>
<dbReference type="PhosphoSitePlus" id="Q9QXD6"/>
<dbReference type="SwissPalm" id="Q9QXD6"/>
<dbReference type="REPRODUCTION-2DPAGE" id="IPI00228630"/>
<dbReference type="REPRODUCTION-2DPAGE" id="Q9QXD6"/>
<dbReference type="jPOST" id="Q9QXD6"/>
<dbReference type="PaxDb" id="10090-ENSMUSP00000090564"/>
<dbReference type="PeptideAtlas" id="Q9QXD6"/>
<dbReference type="ProteomicsDB" id="275824"/>
<dbReference type="Antibodypedia" id="1620">
    <property type="antibodies" value="283 antibodies from 34 providers"/>
</dbReference>
<dbReference type="DNASU" id="14121"/>
<dbReference type="Ensembl" id="ENSMUST00000092888.11">
    <property type="protein sequence ID" value="ENSMUSP00000090564.5"/>
    <property type="gene ID" value="ENSMUSG00000069805.11"/>
</dbReference>
<dbReference type="GeneID" id="14121"/>
<dbReference type="KEGG" id="mmu:14121"/>
<dbReference type="UCSC" id="uc007qxg.2">
    <property type="organism name" value="mouse"/>
</dbReference>
<dbReference type="AGR" id="MGI:95492"/>
<dbReference type="CTD" id="2203"/>
<dbReference type="MGI" id="MGI:95492">
    <property type="gene designation" value="Fbp1"/>
</dbReference>
<dbReference type="VEuPathDB" id="HostDB:ENSMUSG00000069805"/>
<dbReference type="eggNOG" id="KOG1458">
    <property type="taxonomic scope" value="Eukaryota"/>
</dbReference>
<dbReference type="GeneTree" id="ENSGT00390000015513"/>
<dbReference type="HOGENOM" id="CLU_039977_1_0_1"/>
<dbReference type="InParanoid" id="Q9QXD6"/>
<dbReference type="OMA" id="YIPENCP"/>
<dbReference type="OrthoDB" id="10256725at2759"/>
<dbReference type="PhylomeDB" id="Q9QXD6"/>
<dbReference type="TreeFam" id="TF314824"/>
<dbReference type="Reactome" id="R-MMU-70263">
    <property type="pathway name" value="Gluconeogenesis"/>
</dbReference>
<dbReference type="UniPathway" id="UPA00138"/>
<dbReference type="BioGRID-ORCS" id="14121">
    <property type="hits" value="1 hit in 78 CRISPR screens"/>
</dbReference>
<dbReference type="ChiTaRS" id="Fbp1">
    <property type="organism name" value="mouse"/>
</dbReference>
<dbReference type="PRO" id="PR:Q9QXD6"/>
<dbReference type="Proteomes" id="UP000000589">
    <property type="component" value="Chromosome 13"/>
</dbReference>
<dbReference type="RNAct" id="Q9QXD6">
    <property type="molecule type" value="protein"/>
</dbReference>
<dbReference type="Bgee" id="ENSMUSG00000069805">
    <property type="expression patterns" value="Expressed in left lobe of liver and 122 other cell types or tissues"/>
</dbReference>
<dbReference type="ExpressionAtlas" id="Q9QXD6">
    <property type="expression patterns" value="baseline and differential"/>
</dbReference>
<dbReference type="GO" id="GO:0005737">
    <property type="term" value="C:cytoplasm"/>
    <property type="evidence" value="ECO:0000250"/>
    <property type="project" value="UniProtKB"/>
</dbReference>
<dbReference type="GO" id="GO:0005615">
    <property type="term" value="C:extracellular space"/>
    <property type="evidence" value="ECO:0007669"/>
    <property type="project" value="Ensembl"/>
</dbReference>
<dbReference type="GO" id="GO:0005634">
    <property type="term" value="C:nucleus"/>
    <property type="evidence" value="ECO:0007669"/>
    <property type="project" value="Ensembl"/>
</dbReference>
<dbReference type="GO" id="GO:0016208">
    <property type="term" value="F:AMP binding"/>
    <property type="evidence" value="ECO:0000250"/>
    <property type="project" value="UniProtKB"/>
</dbReference>
<dbReference type="GO" id="GO:0042132">
    <property type="term" value="F:fructose 1,6-bisphosphate 1-phosphatase activity"/>
    <property type="evidence" value="ECO:0000315"/>
    <property type="project" value="MGI"/>
</dbReference>
<dbReference type="GO" id="GO:0042802">
    <property type="term" value="F:identical protein binding"/>
    <property type="evidence" value="ECO:0000250"/>
    <property type="project" value="UniProtKB"/>
</dbReference>
<dbReference type="GO" id="GO:0046872">
    <property type="term" value="F:metal ion binding"/>
    <property type="evidence" value="ECO:0000250"/>
    <property type="project" value="UniProtKB"/>
</dbReference>
<dbReference type="GO" id="GO:0048029">
    <property type="term" value="F:monosaccharide binding"/>
    <property type="evidence" value="ECO:0000250"/>
    <property type="project" value="UniProtKB"/>
</dbReference>
<dbReference type="GO" id="GO:0061629">
    <property type="term" value="F:RNA polymerase II-specific DNA-binding transcription factor binding"/>
    <property type="evidence" value="ECO:0007669"/>
    <property type="project" value="Ensembl"/>
</dbReference>
<dbReference type="GO" id="GO:0071475">
    <property type="term" value="P:cellular hyperosmotic salinity response"/>
    <property type="evidence" value="ECO:0007669"/>
    <property type="project" value="Ensembl"/>
</dbReference>
<dbReference type="GO" id="GO:0071477">
    <property type="term" value="P:cellular hypotonic salinity response"/>
    <property type="evidence" value="ECO:0007669"/>
    <property type="project" value="Ensembl"/>
</dbReference>
<dbReference type="GO" id="GO:0071320">
    <property type="term" value="P:cellular response to cAMP"/>
    <property type="evidence" value="ECO:0007669"/>
    <property type="project" value="Ensembl"/>
</dbReference>
<dbReference type="GO" id="GO:0032869">
    <property type="term" value="P:cellular response to insulin stimulus"/>
    <property type="evidence" value="ECO:0007669"/>
    <property type="project" value="Ensembl"/>
</dbReference>
<dbReference type="GO" id="GO:0071286">
    <property type="term" value="P:cellular response to magnesium ion"/>
    <property type="evidence" value="ECO:0000250"/>
    <property type="project" value="UniProtKB"/>
</dbReference>
<dbReference type="GO" id="GO:1904628">
    <property type="term" value="P:cellular response to phorbol 13-acetate 12-myristate"/>
    <property type="evidence" value="ECO:0007669"/>
    <property type="project" value="Ensembl"/>
</dbReference>
<dbReference type="GO" id="GO:0097403">
    <property type="term" value="P:cellular response to raffinose"/>
    <property type="evidence" value="ECO:0007669"/>
    <property type="project" value="Ensembl"/>
</dbReference>
<dbReference type="GO" id="GO:0071466">
    <property type="term" value="P:cellular response to xenobiotic stimulus"/>
    <property type="evidence" value="ECO:0000250"/>
    <property type="project" value="UniProtKB"/>
</dbReference>
<dbReference type="GO" id="GO:0006002">
    <property type="term" value="P:fructose 6-phosphate metabolic process"/>
    <property type="evidence" value="ECO:0000250"/>
    <property type="project" value="UniProtKB"/>
</dbReference>
<dbReference type="GO" id="GO:0006094">
    <property type="term" value="P:gluconeogenesis"/>
    <property type="evidence" value="ECO:0000315"/>
    <property type="project" value="MGI"/>
</dbReference>
<dbReference type="GO" id="GO:0030308">
    <property type="term" value="P:negative regulation of cell growth"/>
    <property type="evidence" value="ECO:0000250"/>
    <property type="project" value="UniProtKB"/>
</dbReference>
<dbReference type="GO" id="GO:0045820">
    <property type="term" value="P:negative regulation of glycolytic process"/>
    <property type="evidence" value="ECO:0000250"/>
    <property type="project" value="UniProtKB"/>
</dbReference>
<dbReference type="GO" id="GO:0046580">
    <property type="term" value="P:negative regulation of Ras protein signal transduction"/>
    <property type="evidence" value="ECO:0000250"/>
    <property type="project" value="UniProtKB"/>
</dbReference>
<dbReference type="GO" id="GO:0000122">
    <property type="term" value="P:negative regulation of transcription by RNA polymerase II"/>
    <property type="evidence" value="ECO:0007669"/>
    <property type="project" value="Ensembl"/>
</dbReference>
<dbReference type="GO" id="GO:0006111">
    <property type="term" value="P:regulation of gluconeogenesis"/>
    <property type="evidence" value="ECO:0000250"/>
    <property type="project" value="UniProtKB"/>
</dbReference>
<dbReference type="GO" id="GO:0031667">
    <property type="term" value="P:response to nutrient levels"/>
    <property type="evidence" value="ECO:0007669"/>
    <property type="project" value="Ensembl"/>
</dbReference>
<dbReference type="CDD" id="cd00354">
    <property type="entry name" value="FBPase"/>
    <property type="match status" value="1"/>
</dbReference>
<dbReference type="FunFam" id="3.30.540.10:FF:000037">
    <property type="entry name" value="Fructose-1,6-bisphosphatase 1"/>
    <property type="match status" value="1"/>
</dbReference>
<dbReference type="FunFam" id="3.40.190.80:FF:000001">
    <property type="entry name" value="Fructose-1,6-bisphosphatase class 1"/>
    <property type="match status" value="1"/>
</dbReference>
<dbReference type="Gene3D" id="3.40.190.80">
    <property type="match status" value="1"/>
</dbReference>
<dbReference type="Gene3D" id="3.30.540.10">
    <property type="entry name" value="Fructose-1,6-Bisphosphatase, subunit A, domain 1"/>
    <property type="match status" value="1"/>
</dbReference>
<dbReference type="HAMAP" id="MF_01855">
    <property type="entry name" value="FBPase_class1"/>
    <property type="match status" value="1"/>
</dbReference>
<dbReference type="InterPro" id="IPR044015">
    <property type="entry name" value="FBPase_C_dom"/>
</dbReference>
<dbReference type="InterPro" id="IPR000146">
    <property type="entry name" value="FBPase_class-1"/>
</dbReference>
<dbReference type="InterPro" id="IPR033391">
    <property type="entry name" value="FBPase_N"/>
</dbReference>
<dbReference type="InterPro" id="IPR028343">
    <property type="entry name" value="FBPtase"/>
</dbReference>
<dbReference type="InterPro" id="IPR020548">
    <property type="entry name" value="Fructose_bisphosphatase_AS"/>
</dbReference>
<dbReference type="NCBIfam" id="NF006778">
    <property type="entry name" value="PRK09293.1-1"/>
    <property type="match status" value="1"/>
</dbReference>
<dbReference type="PANTHER" id="PTHR11556:SF11">
    <property type="entry name" value="FRUCTOSE-1,6-BISPHOSPHATASE 1"/>
    <property type="match status" value="1"/>
</dbReference>
<dbReference type="PANTHER" id="PTHR11556">
    <property type="entry name" value="FRUCTOSE-1,6-BISPHOSPHATASE-RELATED"/>
    <property type="match status" value="1"/>
</dbReference>
<dbReference type="Pfam" id="PF00316">
    <property type="entry name" value="FBPase"/>
    <property type="match status" value="1"/>
</dbReference>
<dbReference type="Pfam" id="PF18913">
    <property type="entry name" value="FBPase_C"/>
    <property type="match status" value="1"/>
</dbReference>
<dbReference type="PIRSF" id="PIRSF500210">
    <property type="entry name" value="FBPtase"/>
    <property type="match status" value="1"/>
</dbReference>
<dbReference type="PIRSF" id="PIRSF000904">
    <property type="entry name" value="FBPtase_SBPase"/>
    <property type="match status" value="1"/>
</dbReference>
<dbReference type="PRINTS" id="PR00115">
    <property type="entry name" value="F16BPHPHTASE"/>
</dbReference>
<dbReference type="SUPFAM" id="SSF56655">
    <property type="entry name" value="Carbohydrate phosphatase"/>
    <property type="match status" value="1"/>
</dbReference>
<dbReference type="PROSITE" id="PS00124">
    <property type="entry name" value="FBPASE"/>
    <property type="match status" value="1"/>
</dbReference>
<organism>
    <name type="scientific">Mus musculus</name>
    <name type="common">Mouse</name>
    <dbReference type="NCBI Taxonomy" id="10090"/>
    <lineage>
        <taxon>Eukaryota</taxon>
        <taxon>Metazoa</taxon>
        <taxon>Chordata</taxon>
        <taxon>Craniata</taxon>
        <taxon>Vertebrata</taxon>
        <taxon>Euteleostomi</taxon>
        <taxon>Mammalia</taxon>
        <taxon>Eutheria</taxon>
        <taxon>Euarchontoglires</taxon>
        <taxon>Glires</taxon>
        <taxon>Rodentia</taxon>
        <taxon>Myomorpha</taxon>
        <taxon>Muroidea</taxon>
        <taxon>Muridae</taxon>
        <taxon>Murinae</taxon>
        <taxon>Mus</taxon>
        <taxon>Mus</taxon>
    </lineage>
</organism>
<keyword id="KW-0007">Acetylation</keyword>
<keyword id="KW-0021">Allosteric enzyme</keyword>
<keyword id="KW-0119">Carbohydrate metabolism</keyword>
<keyword id="KW-0312">Gluconeogenesis</keyword>
<keyword id="KW-0378">Hydrolase</keyword>
<keyword id="KW-0460">Magnesium</keyword>
<keyword id="KW-0479">Metal-binding</keyword>
<keyword id="KW-0597">Phosphoprotein</keyword>
<keyword id="KW-1185">Reference proteome</keyword>
<protein>
    <recommendedName>
        <fullName>Fructose-1,6-bisphosphatase 1</fullName>
        <shortName>FBPase 1</shortName>
        <ecNumber evidence="4">3.1.3.11</ecNumber>
    </recommendedName>
    <alternativeName>
        <fullName>D-fructose-1,6-bisphosphate 1-phosphohydrolase 1</fullName>
    </alternativeName>
    <alternativeName>
        <fullName>Fructose-1,6-bisphosphatase isozyme 3</fullName>
        <shortName>FBPase 3</shortName>
    </alternativeName>
    <alternativeName>
        <fullName>Liver FBPase</fullName>
    </alternativeName>
</protein>
<gene>
    <name type="primary">Fbp1</name>
    <name type="synonym">Fbp</name>
    <name type="synonym">Fbp3</name>
</gene>
<accession>Q9QXD6</accession>
<accession>P97323</accession>
<accession>Q3UEH1</accession>
<feature type="initiator methionine" description="Removed" evidence="3">
    <location>
        <position position="1"/>
    </location>
</feature>
<feature type="chain" id="PRO_0000200499" description="Fructose-1,6-bisphosphatase 1">
    <location>
        <begin position="2"/>
        <end position="338"/>
    </location>
</feature>
<feature type="binding site" evidence="2">
    <location>
        <begin position="18"/>
        <end position="22"/>
    </location>
    <ligand>
        <name>AMP</name>
        <dbReference type="ChEBI" id="CHEBI:456215"/>
    </ligand>
</feature>
<feature type="binding site" evidence="2">
    <location>
        <begin position="28"/>
        <end position="32"/>
    </location>
    <ligand>
        <name>AMP</name>
        <dbReference type="ChEBI" id="CHEBI:456215"/>
    </ligand>
</feature>
<feature type="binding site" evidence="2">
    <location>
        <position position="69"/>
    </location>
    <ligand>
        <name>Mg(2+)</name>
        <dbReference type="ChEBI" id="CHEBI:18420"/>
        <label>1</label>
    </ligand>
</feature>
<feature type="binding site" evidence="2">
    <location>
        <position position="98"/>
    </location>
    <ligand>
        <name>Mg(2+)</name>
        <dbReference type="ChEBI" id="CHEBI:18420"/>
        <label>1</label>
    </ligand>
</feature>
<feature type="binding site" evidence="2">
    <location>
        <position position="98"/>
    </location>
    <ligand>
        <name>Mg(2+)</name>
        <dbReference type="ChEBI" id="CHEBI:18420"/>
        <label>2</label>
    </ligand>
</feature>
<feature type="binding site" evidence="2">
    <location>
        <begin position="113"/>
        <end position="114"/>
    </location>
    <ligand>
        <name>AMP</name>
        <dbReference type="ChEBI" id="CHEBI:456215"/>
    </ligand>
</feature>
<feature type="binding site" evidence="2">
    <location>
        <position position="119"/>
    </location>
    <ligand>
        <name>Mg(2+)</name>
        <dbReference type="ChEBI" id="CHEBI:18420"/>
        <label>2</label>
    </ligand>
</feature>
<feature type="binding site" evidence="2">
    <location>
        <position position="119"/>
    </location>
    <ligand>
        <name>Mg(2+)</name>
        <dbReference type="ChEBI" id="CHEBI:18420"/>
        <label>3</label>
    </ligand>
</feature>
<feature type="binding site" evidence="2">
    <location>
        <position position="121"/>
    </location>
    <ligand>
        <name>Mg(2+)</name>
        <dbReference type="ChEBI" id="CHEBI:18420"/>
        <label>2</label>
    </ligand>
</feature>
<feature type="binding site" evidence="2">
    <location>
        <begin position="122"/>
        <end position="125"/>
    </location>
    <ligand>
        <name>substrate</name>
    </ligand>
</feature>
<feature type="binding site" evidence="2">
    <location>
        <position position="122"/>
    </location>
    <ligand>
        <name>Mg(2+)</name>
        <dbReference type="ChEBI" id="CHEBI:18420"/>
        <label>3</label>
    </ligand>
</feature>
<feature type="binding site" evidence="2">
    <location>
        <position position="141"/>
    </location>
    <ligand>
        <name>AMP</name>
        <dbReference type="ChEBI" id="CHEBI:456215"/>
    </ligand>
</feature>
<feature type="binding site" evidence="2">
    <location>
        <begin position="213"/>
        <end position="216"/>
    </location>
    <ligand>
        <name>substrate</name>
    </ligand>
</feature>
<feature type="binding site" evidence="2">
    <location>
        <begin position="244"/>
        <end position="249"/>
    </location>
    <ligand>
        <name>substrate</name>
    </ligand>
</feature>
<feature type="binding site" evidence="2">
    <location>
        <position position="265"/>
    </location>
    <ligand>
        <name>substrate</name>
    </ligand>
</feature>
<feature type="binding site" evidence="2">
    <location>
        <begin position="275"/>
        <end position="277"/>
    </location>
    <ligand>
        <name>substrate</name>
    </ligand>
</feature>
<feature type="binding site" evidence="2">
    <location>
        <position position="281"/>
    </location>
    <ligand>
        <name>Mg(2+)</name>
        <dbReference type="ChEBI" id="CHEBI:18420"/>
        <label>3</label>
    </ligand>
</feature>
<feature type="modified residue" description="N-acetylalanine" evidence="3">
    <location>
        <position position="2"/>
    </location>
</feature>
<feature type="modified residue" description="N6-succinyllysine" evidence="12">
    <location>
        <position position="151"/>
    </location>
</feature>
<feature type="modified residue" description="Phosphotyrosine" evidence="10 11">
    <location>
        <position position="216"/>
    </location>
</feature>
<feature type="modified residue" description="Phosphotyrosine" evidence="11">
    <location>
        <position position="245"/>
    </location>
</feature>
<feature type="modified residue" description="Phosphotyrosine" evidence="11">
    <location>
        <position position="265"/>
    </location>
</feature>
<feature type="sequence conflict" description="In Ref. 4; CAA71946." evidence="9" ref="4">
    <original>D</original>
    <variation>E</variation>
    <location>
        <position position="198"/>
    </location>
</feature>
<feature type="sequence conflict" description="In Ref. 4; CAA71946." evidence="9" ref="4">
    <original>V</original>
    <variation>G</variation>
    <location>
        <position position="201"/>
    </location>
</feature>
<feature type="sequence conflict" description="In Ref. 4; CAA71946." evidence="9" ref="4">
    <original>D</original>
    <variation>N</variation>
    <location>
        <position position="221"/>
    </location>
</feature>
<feature type="sequence conflict" description="In Ref. 4; CAA71946." evidence="9" ref="4">
    <original>N</original>
    <variation>L</variation>
    <location>
        <position position="225"/>
    </location>
</feature>
<feature type="sequence conflict" description="In Ref. 4; CAA71946." evidence="9" ref="4">
    <original>L</original>
    <variation>H</variation>
    <location>
        <position position="228"/>
    </location>
</feature>
<feature type="sequence conflict" description="In Ref. 4; CAA71946." evidence="9" ref="4">
    <original>K</original>
    <variation>Q</variation>
    <location>
        <position position="231"/>
    </location>
</feature>
<feature type="sequence conflict" description="In Ref. 4; CAA71946." evidence="9" ref="4">
    <original>PP</original>
    <variation>HE</variation>
    <location>
        <begin position="234"/>
        <end position="235"/>
    </location>
</feature>
<feature type="sequence conflict" description="In Ref. 4; CAA71946." evidence="9" ref="4">
    <original>S</original>
    <variation>T</variation>
    <location>
        <position position="238"/>
    </location>
</feature>
<feature type="sequence conflict" description="In Ref. 4; CAA71946." evidence="9" ref="4">
    <original>A</original>
    <variation>T</variation>
    <location>
        <position position="243"/>
    </location>
</feature>
<comment type="function">
    <text evidence="6 7 8">Catalyzes the hydrolysis of fructose 1,6-bisphosphate to fructose 6-phosphate in the presence of divalent cations, acting as a rate-limiting enzyme in gluconeogenesis. Plays a role in regulating glucose sensing and insulin secretion of pancreatic beta-cells. Appears to modulate glycerol gluconeogenesis in liver. Important regulator of appetite and adiposity; increased expression of the protein in liver after nutrient excess increases circulating satiety hormones and reduces appetite-stimulating neuropeptides and thus seems to provide a feedback mechanism to limit weight gain.</text>
</comment>
<comment type="catalytic activity">
    <reaction evidence="4">
        <text>beta-D-fructose 1,6-bisphosphate + H2O = beta-D-fructose 6-phosphate + phosphate</text>
        <dbReference type="Rhea" id="RHEA:11064"/>
        <dbReference type="ChEBI" id="CHEBI:15377"/>
        <dbReference type="ChEBI" id="CHEBI:32966"/>
        <dbReference type="ChEBI" id="CHEBI:43474"/>
        <dbReference type="ChEBI" id="CHEBI:57634"/>
        <dbReference type="EC" id="3.1.3.11"/>
    </reaction>
</comment>
<comment type="cofactor">
    <cofactor evidence="2">
        <name>Mg(2+)</name>
        <dbReference type="ChEBI" id="CHEBI:18420"/>
    </cofactor>
    <text evidence="2">Binds 3 Mg(2+) ions per subunit.</text>
</comment>
<comment type="activity regulation">
    <text evidence="1">Subject to complex allosteric regulation. The enzyme can assume an active R-state, or an inactive T-state. Intermediate conformations may exist. AMP acts as an allosteric inhibitor. AMP binding affects the turnover of bound substrate and not the affinity for substrate. Fructose 2,6-bisphosphate acts as a competitive inhibitor. Fructose 2,6-bisphosphate and AMP have synergistic effects (By similarity).</text>
</comment>
<comment type="pathway">
    <text>Carbohydrate biosynthesis; gluconeogenesis.</text>
</comment>
<comment type="subunit">
    <text evidence="2">Homotetramer.</text>
</comment>
<comment type="tissue specificity">
    <text evidence="5 6 7 8">Detected in pancreatic beta-cell lines MIN6 and beta-TC and in liver (at protein level). Preferentially expressed in liver, with lower levels detected in pancreatic islets and intestine, and very low levels in blood, muscle, brain and spleen.</text>
</comment>
<comment type="induction">
    <text evidence="7">Up-regulated in pancreas by obesity and dietary fat intake and in diabetic animals.</text>
</comment>
<comment type="similarity">
    <text evidence="9">Belongs to the FBPase class 1 family.</text>
</comment>
<reference key="1">
    <citation type="journal article" date="2001" name="Gene">
        <title>Characterization of the mouse liver fructose-1,6-bisphosphatase gene.</title>
        <authorList>
            <person name="Stein S."/>
            <person name="Liehr T."/>
            <person name="Eschrich K."/>
        </authorList>
    </citation>
    <scope>NUCLEOTIDE SEQUENCE [MRNA]</scope>
    <scope>TISSUE SPECIFICITY</scope>
    <source>
        <tissue>Liver</tissue>
    </source>
</reference>
<reference key="2">
    <citation type="journal article" date="2005" name="Science">
        <title>The transcriptional landscape of the mammalian genome.</title>
        <authorList>
            <person name="Carninci P."/>
            <person name="Kasukawa T."/>
            <person name="Katayama S."/>
            <person name="Gough J."/>
            <person name="Frith M.C."/>
            <person name="Maeda N."/>
            <person name="Oyama R."/>
            <person name="Ravasi T."/>
            <person name="Lenhard B."/>
            <person name="Wells C."/>
            <person name="Kodzius R."/>
            <person name="Shimokawa K."/>
            <person name="Bajic V.B."/>
            <person name="Brenner S.E."/>
            <person name="Batalov S."/>
            <person name="Forrest A.R."/>
            <person name="Zavolan M."/>
            <person name="Davis M.J."/>
            <person name="Wilming L.G."/>
            <person name="Aidinis V."/>
            <person name="Allen J.E."/>
            <person name="Ambesi-Impiombato A."/>
            <person name="Apweiler R."/>
            <person name="Aturaliya R.N."/>
            <person name="Bailey T.L."/>
            <person name="Bansal M."/>
            <person name="Baxter L."/>
            <person name="Beisel K.W."/>
            <person name="Bersano T."/>
            <person name="Bono H."/>
            <person name="Chalk A.M."/>
            <person name="Chiu K.P."/>
            <person name="Choudhary V."/>
            <person name="Christoffels A."/>
            <person name="Clutterbuck D.R."/>
            <person name="Crowe M.L."/>
            <person name="Dalla E."/>
            <person name="Dalrymple B.P."/>
            <person name="de Bono B."/>
            <person name="Della Gatta G."/>
            <person name="di Bernardo D."/>
            <person name="Down T."/>
            <person name="Engstrom P."/>
            <person name="Fagiolini M."/>
            <person name="Faulkner G."/>
            <person name="Fletcher C.F."/>
            <person name="Fukushima T."/>
            <person name="Furuno M."/>
            <person name="Futaki S."/>
            <person name="Gariboldi M."/>
            <person name="Georgii-Hemming P."/>
            <person name="Gingeras T.R."/>
            <person name="Gojobori T."/>
            <person name="Green R.E."/>
            <person name="Gustincich S."/>
            <person name="Harbers M."/>
            <person name="Hayashi Y."/>
            <person name="Hensch T.K."/>
            <person name="Hirokawa N."/>
            <person name="Hill D."/>
            <person name="Huminiecki L."/>
            <person name="Iacono M."/>
            <person name="Ikeo K."/>
            <person name="Iwama A."/>
            <person name="Ishikawa T."/>
            <person name="Jakt M."/>
            <person name="Kanapin A."/>
            <person name="Katoh M."/>
            <person name="Kawasawa Y."/>
            <person name="Kelso J."/>
            <person name="Kitamura H."/>
            <person name="Kitano H."/>
            <person name="Kollias G."/>
            <person name="Krishnan S.P."/>
            <person name="Kruger A."/>
            <person name="Kummerfeld S.K."/>
            <person name="Kurochkin I.V."/>
            <person name="Lareau L.F."/>
            <person name="Lazarevic D."/>
            <person name="Lipovich L."/>
            <person name="Liu J."/>
            <person name="Liuni S."/>
            <person name="McWilliam S."/>
            <person name="Madan Babu M."/>
            <person name="Madera M."/>
            <person name="Marchionni L."/>
            <person name="Matsuda H."/>
            <person name="Matsuzawa S."/>
            <person name="Miki H."/>
            <person name="Mignone F."/>
            <person name="Miyake S."/>
            <person name="Morris K."/>
            <person name="Mottagui-Tabar S."/>
            <person name="Mulder N."/>
            <person name="Nakano N."/>
            <person name="Nakauchi H."/>
            <person name="Ng P."/>
            <person name="Nilsson R."/>
            <person name="Nishiguchi S."/>
            <person name="Nishikawa S."/>
            <person name="Nori F."/>
            <person name="Ohara O."/>
            <person name="Okazaki Y."/>
            <person name="Orlando V."/>
            <person name="Pang K.C."/>
            <person name="Pavan W.J."/>
            <person name="Pavesi G."/>
            <person name="Pesole G."/>
            <person name="Petrovsky N."/>
            <person name="Piazza S."/>
            <person name="Reed J."/>
            <person name="Reid J.F."/>
            <person name="Ring B.Z."/>
            <person name="Ringwald M."/>
            <person name="Rost B."/>
            <person name="Ruan Y."/>
            <person name="Salzberg S.L."/>
            <person name="Sandelin A."/>
            <person name="Schneider C."/>
            <person name="Schoenbach C."/>
            <person name="Sekiguchi K."/>
            <person name="Semple C.A."/>
            <person name="Seno S."/>
            <person name="Sessa L."/>
            <person name="Sheng Y."/>
            <person name="Shibata Y."/>
            <person name="Shimada H."/>
            <person name="Shimada K."/>
            <person name="Silva D."/>
            <person name="Sinclair B."/>
            <person name="Sperling S."/>
            <person name="Stupka E."/>
            <person name="Sugiura K."/>
            <person name="Sultana R."/>
            <person name="Takenaka Y."/>
            <person name="Taki K."/>
            <person name="Tammoja K."/>
            <person name="Tan S.L."/>
            <person name="Tang S."/>
            <person name="Taylor M.S."/>
            <person name="Tegner J."/>
            <person name="Teichmann S.A."/>
            <person name="Ueda H.R."/>
            <person name="van Nimwegen E."/>
            <person name="Verardo R."/>
            <person name="Wei C.L."/>
            <person name="Yagi K."/>
            <person name="Yamanishi H."/>
            <person name="Zabarovsky E."/>
            <person name="Zhu S."/>
            <person name="Zimmer A."/>
            <person name="Hide W."/>
            <person name="Bult C."/>
            <person name="Grimmond S.M."/>
            <person name="Teasdale R.D."/>
            <person name="Liu E.T."/>
            <person name="Brusic V."/>
            <person name="Quackenbush J."/>
            <person name="Wahlestedt C."/>
            <person name="Mattick J.S."/>
            <person name="Hume D.A."/>
            <person name="Kai C."/>
            <person name="Sasaki D."/>
            <person name="Tomaru Y."/>
            <person name="Fukuda S."/>
            <person name="Kanamori-Katayama M."/>
            <person name="Suzuki M."/>
            <person name="Aoki J."/>
            <person name="Arakawa T."/>
            <person name="Iida J."/>
            <person name="Imamura K."/>
            <person name="Itoh M."/>
            <person name="Kato T."/>
            <person name="Kawaji H."/>
            <person name="Kawagashira N."/>
            <person name="Kawashima T."/>
            <person name="Kojima M."/>
            <person name="Kondo S."/>
            <person name="Konno H."/>
            <person name="Nakano K."/>
            <person name="Ninomiya N."/>
            <person name="Nishio T."/>
            <person name="Okada M."/>
            <person name="Plessy C."/>
            <person name="Shibata K."/>
            <person name="Shiraki T."/>
            <person name="Suzuki S."/>
            <person name="Tagami M."/>
            <person name="Waki K."/>
            <person name="Watahiki A."/>
            <person name="Okamura-Oho Y."/>
            <person name="Suzuki H."/>
            <person name="Kawai J."/>
            <person name="Hayashizaki Y."/>
        </authorList>
    </citation>
    <scope>NUCLEOTIDE SEQUENCE [LARGE SCALE MRNA]</scope>
    <source>
        <strain>C57BL/6J</strain>
        <tissue>Kidney</tissue>
        <tissue>Liver</tissue>
    </source>
</reference>
<reference key="3">
    <citation type="journal article" date="2004" name="Genome Res.">
        <title>The status, quality, and expansion of the NIH full-length cDNA project: the Mammalian Gene Collection (MGC).</title>
        <authorList>
            <consortium name="The MGC Project Team"/>
        </authorList>
    </citation>
    <scope>NUCLEOTIDE SEQUENCE [LARGE SCALE MRNA]</scope>
    <source>
        <strain>FVB/N</strain>
        <tissue>Liver</tissue>
    </source>
</reference>
<reference key="4">
    <citation type="journal article" date="1997" name="NeuroReport">
        <title>Various fructose-1,6-bisphosphatase mRNAs in mouse brain, liver, kidney and heart.</title>
        <authorList>
            <person name="Cloix J.F."/>
            <person name="Beaulieu E."/>
            <person name="Hevor T.K."/>
        </authorList>
    </citation>
    <scope>NUCLEOTIDE SEQUENCE [MRNA] OF 154-247</scope>
    <source>
        <strain>C57BL/6J</strain>
    </source>
</reference>
<reference key="5">
    <citation type="journal article" date="2006" name="Endocrinology">
        <title>Expression of human fructose-1,6-bisphosphatase in the liver of transgenic mice results in increased glycerol gluconeogenesis.</title>
        <authorList>
            <person name="Lamont B.J."/>
            <person name="Visinoni S."/>
            <person name="Fam B.C."/>
            <person name="Kebede M."/>
            <person name="Weinrich B."/>
            <person name="Papapostolou S."/>
            <person name="Massinet H."/>
            <person name="Proietto J."/>
            <person name="Favaloro J."/>
            <person name="Andrikopoulos S."/>
        </authorList>
    </citation>
    <scope>FUNCTION</scope>
    <scope>TISSUE SPECIFICITY</scope>
</reference>
<reference key="6">
    <citation type="journal article" date="2007" name="Proc. Natl. Acad. Sci. U.S.A.">
        <title>Large-scale phosphorylation analysis of mouse liver.</title>
        <authorList>
            <person name="Villen J."/>
            <person name="Beausoleil S.A."/>
            <person name="Gerber S.A."/>
            <person name="Gygi S.P."/>
        </authorList>
    </citation>
    <scope>PHOSPHORYLATION [LARGE SCALE ANALYSIS] AT TYR-216</scope>
    <scope>IDENTIFICATION BY MASS SPECTROMETRY [LARGE SCALE ANALYSIS]</scope>
    <source>
        <tissue>Liver</tissue>
    </source>
</reference>
<reference key="7">
    <citation type="journal article" date="2008" name="Diabetes">
        <title>Fructose-1,6-bisphosphatase overexpression in pancreatic beta-cells results in reduced insulin secretion: a new mechanism for fat-induced impairment of beta-cell function.</title>
        <authorList>
            <person name="Kebede M."/>
            <person name="Favaloro J."/>
            <person name="Gunton J.E."/>
            <person name="Laybutt D.R."/>
            <person name="Shaw M."/>
            <person name="Wong N."/>
            <person name="Fam B.C."/>
            <person name="Aston-Mourney K."/>
            <person name="Rantzau C."/>
            <person name="Zulli A."/>
            <person name="Proietto J."/>
            <person name="Andrikopoulos S."/>
        </authorList>
    </citation>
    <scope>FUNCTION</scope>
    <scope>TISSUE SPECIFICITY</scope>
    <scope>INDUCTION</scope>
</reference>
<reference key="8">
    <citation type="journal article" date="2010" name="Cell">
        <title>A tissue-specific atlas of mouse protein phosphorylation and expression.</title>
        <authorList>
            <person name="Huttlin E.L."/>
            <person name="Jedrychowski M.P."/>
            <person name="Elias J.E."/>
            <person name="Goswami T."/>
            <person name="Rad R."/>
            <person name="Beausoleil S.A."/>
            <person name="Villen J."/>
            <person name="Haas W."/>
            <person name="Sowa M.E."/>
            <person name="Gygi S.P."/>
        </authorList>
    </citation>
    <scope>PHOSPHORYLATION [LARGE SCALE ANALYSIS] AT TYR-216; TYR-245 AND TYR-265</scope>
    <scope>IDENTIFICATION BY MASS SPECTROMETRY [LARGE SCALE ANALYSIS]</scope>
    <source>
        <tissue>Kidney</tissue>
        <tissue>Liver</tissue>
        <tissue>Testis</tissue>
    </source>
</reference>
<reference key="9">
    <citation type="journal article" date="2010" name="Endocrinology">
        <title>Fructose-1,6-bisphosphatase regulates glucose-stimulated insulin secretion of mouse pancreatic beta-cells.</title>
        <authorList>
            <person name="Zhang Y."/>
            <person name="Xie Z."/>
            <person name="Zhou G."/>
            <person name="Zhang H."/>
            <person name="Lu J."/>
            <person name="Zhang W.J."/>
        </authorList>
    </citation>
    <scope>FUNCTION</scope>
    <scope>TISSUE SPECIFICITY</scope>
</reference>
<reference key="10">
    <citation type="journal article" date="2013" name="Mol. Cell">
        <title>SIRT5-mediated lysine desuccinylation impacts diverse metabolic pathways.</title>
        <authorList>
            <person name="Park J."/>
            <person name="Chen Y."/>
            <person name="Tishkoff D.X."/>
            <person name="Peng C."/>
            <person name="Tan M."/>
            <person name="Dai L."/>
            <person name="Xie Z."/>
            <person name="Zhang Y."/>
            <person name="Zwaans B.M."/>
            <person name="Skinner M.E."/>
            <person name="Lombard D.B."/>
            <person name="Zhao Y."/>
        </authorList>
    </citation>
    <scope>SUCCINYLATION [LARGE SCALE ANALYSIS] AT LYS-151</scope>
    <scope>IDENTIFICATION BY MASS SPECTROMETRY [LARGE SCALE ANALYSIS]</scope>
    <source>
        <tissue>Liver</tissue>
    </source>
</reference>